<name>NTPPA_GLUOX</name>
<reference key="1">
    <citation type="journal article" date="2005" name="Nat. Biotechnol.">
        <title>Complete genome sequence of the acetic acid bacterium Gluconobacter oxydans.</title>
        <authorList>
            <person name="Prust C."/>
            <person name="Hoffmeister M."/>
            <person name="Liesegang H."/>
            <person name="Wiezer A."/>
            <person name="Fricke W.F."/>
            <person name="Ehrenreich A."/>
            <person name="Gottschalk G."/>
            <person name="Deppenmeier U."/>
        </authorList>
    </citation>
    <scope>NUCLEOTIDE SEQUENCE [LARGE SCALE GENOMIC DNA]</scope>
    <source>
        <strain>621H</strain>
    </source>
</reference>
<gene>
    <name type="ordered locus">GOX1003</name>
</gene>
<organism>
    <name type="scientific">Gluconobacter oxydans (strain 621H)</name>
    <name type="common">Gluconobacter suboxydans</name>
    <dbReference type="NCBI Taxonomy" id="290633"/>
    <lineage>
        <taxon>Bacteria</taxon>
        <taxon>Pseudomonadati</taxon>
        <taxon>Pseudomonadota</taxon>
        <taxon>Alphaproteobacteria</taxon>
        <taxon>Acetobacterales</taxon>
        <taxon>Acetobacteraceae</taxon>
        <taxon>Gluconobacter</taxon>
    </lineage>
</organism>
<sequence>MTASPSSAEGSSGLPDRPKLVLASASPRRLSLLEQIGIVPDAVVSADIDEEPRPGELPRPLAQRLARQKAEHVAAQRTDAALVLGADTVVSVGRRVLPKAEDEKTARACLKLLSGRRHKVLTAVVLRPSAGWPQGTPCERLVETSVIFHRLTDAQIDALIAQGDWQGKAGGYAIQGAAAAHIRQIGGSYSAVVGLPLFETAQLLRGQPVGKPSGGWIA</sequence>
<accession>Q5FS71</accession>
<keyword id="KW-0963">Cytoplasm</keyword>
<keyword id="KW-0378">Hydrolase</keyword>
<keyword id="KW-0546">Nucleotide metabolism</keyword>
<keyword id="KW-1185">Reference proteome</keyword>
<proteinExistence type="inferred from homology"/>
<protein>
    <recommendedName>
        <fullName evidence="1">dTTP/UTP pyrophosphatase</fullName>
        <shortName evidence="1">dTTPase/UTPase</shortName>
        <ecNumber evidence="1">3.6.1.9</ecNumber>
    </recommendedName>
    <alternativeName>
        <fullName evidence="1">Nucleoside triphosphate pyrophosphatase</fullName>
    </alternativeName>
    <alternativeName>
        <fullName evidence="1">Nucleotide pyrophosphatase</fullName>
        <shortName evidence="1">Nucleotide PPase</shortName>
    </alternativeName>
</protein>
<comment type="function">
    <text evidence="1">Nucleoside triphosphate pyrophosphatase that hydrolyzes dTTP and UTP. May have a dual role in cell division arrest and in preventing the incorporation of modified nucleotides into cellular nucleic acids.</text>
</comment>
<comment type="catalytic activity">
    <reaction evidence="1">
        <text>dTTP + H2O = dTMP + diphosphate + H(+)</text>
        <dbReference type="Rhea" id="RHEA:28534"/>
        <dbReference type="ChEBI" id="CHEBI:15377"/>
        <dbReference type="ChEBI" id="CHEBI:15378"/>
        <dbReference type="ChEBI" id="CHEBI:33019"/>
        <dbReference type="ChEBI" id="CHEBI:37568"/>
        <dbReference type="ChEBI" id="CHEBI:63528"/>
        <dbReference type="EC" id="3.6.1.9"/>
    </reaction>
</comment>
<comment type="catalytic activity">
    <reaction evidence="1">
        <text>UTP + H2O = UMP + diphosphate + H(+)</text>
        <dbReference type="Rhea" id="RHEA:29395"/>
        <dbReference type="ChEBI" id="CHEBI:15377"/>
        <dbReference type="ChEBI" id="CHEBI:15378"/>
        <dbReference type="ChEBI" id="CHEBI:33019"/>
        <dbReference type="ChEBI" id="CHEBI:46398"/>
        <dbReference type="ChEBI" id="CHEBI:57865"/>
        <dbReference type="EC" id="3.6.1.9"/>
    </reaction>
</comment>
<comment type="cofactor">
    <cofactor evidence="1">
        <name>a divalent metal cation</name>
        <dbReference type="ChEBI" id="CHEBI:60240"/>
    </cofactor>
</comment>
<comment type="subcellular location">
    <subcellularLocation>
        <location evidence="1">Cytoplasm</location>
    </subcellularLocation>
</comment>
<comment type="similarity">
    <text evidence="1">Belongs to the Maf family. YhdE subfamily.</text>
</comment>
<dbReference type="EC" id="3.6.1.9" evidence="1"/>
<dbReference type="EMBL" id="CP000009">
    <property type="protein sequence ID" value="AAW60775.1"/>
    <property type="molecule type" value="Genomic_DNA"/>
</dbReference>
<dbReference type="RefSeq" id="WP_011252568.1">
    <property type="nucleotide sequence ID" value="NZ_LT900338.1"/>
</dbReference>
<dbReference type="SMR" id="Q5FS71"/>
<dbReference type="STRING" id="290633.GOX1003"/>
<dbReference type="KEGG" id="gox:GOX1003"/>
<dbReference type="eggNOG" id="COG0424">
    <property type="taxonomic scope" value="Bacteria"/>
</dbReference>
<dbReference type="HOGENOM" id="CLU_040416_2_0_5"/>
<dbReference type="Proteomes" id="UP000006375">
    <property type="component" value="Chromosome"/>
</dbReference>
<dbReference type="GO" id="GO:0005737">
    <property type="term" value="C:cytoplasm"/>
    <property type="evidence" value="ECO:0007669"/>
    <property type="project" value="UniProtKB-SubCell"/>
</dbReference>
<dbReference type="GO" id="GO:0036218">
    <property type="term" value="F:dTTP diphosphatase activity"/>
    <property type="evidence" value="ECO:0007669"/>
    <property type="project" value="RHEA"/>
</dbReference>
<dbReference type="GO" id="GO:0036221">
    <property type="term" value="F:UTP diphosphatase activity"/>
    <property type="evidence" value="ECO:0007669"/>
    <property type="project" value="RHEA"/>
</dbReference>
<dbReference type="GO" id="GO:0009117">
    <property type="term" value="P:nucleotide metabolic process"/>
    <property type="evidence" value="ECO:0007669"/>
    <property type="project" value="UniProtKB-KW"/>
</dbReference>
<dbReference type="CDD" id="cd00555">
    <property type="entry name" value="Maf"/>
    <property type="match status" value="1"/>
</dbReference>
<dbReference type="Gene3D" id="3.90.950.10">
    <property type="match status" value="1"/>
</dbReference>
<dbReference type="HAMAP" id="MF_00528">
    <property type="entry name" value="Maf"/>
    <property type="match status" value="1"/>
</dbReference>
<dbReference type="InterPro" id="IPR029001">
    <property type="entry name" value="ITPase-like_fam"/>
</dbReference>
<dbReference type="InterPro" id="IPR003697">
    <property type="entry name" value="Maf-like"/>
</dbReference>
<dbReference type="NCBIfam" id="TIGR00172">
    <property type="entry name" value="maf"/>
    <property type="match status" value="1"/>
</dbReference>
<dbReference type="PANTHER" id="PTHR43213">
    <property type="entry name" value="BIFUNCTIONAL DTTP/UTP PYROPHOSPHATASE/METHYLTRANSFERASE PROTEIN-RELATED"/>
    <property type="match status" value="1"/>
</dbReference>
<dbReference type="PANTHER" id="PTHR43213:SF5">
    <property type="entry name" value="BIFUNCTIONAL DTTP_UTP PYROPHOSPHATASE_METHYLTRANSFERASE PROTEIN-RELATED"/>
    <property type="match status" value="1"/>
</dbReference>
<dbReference type="Pfam" id="PF02545">
    <property type="entry name" value="Maf"/>
    <property type="match status" value="1"/>
</dbReference>
<dbReference type="PIRSF" id="PIRSF006305">
    <property type="entry name" value="Maf"/>
    <property type="match status" value="1"/>
</dbReference>
<dbReference type="SUPFAM" id="SSF52972">
    <property type="entry name" value="ITPase-like"/>
    <property type="match status" value="1"/>
</dbReference>
<feature type="chain" id="PRO_0000267314" description="dTTP/UTP pyrophosphatase">
    <location>
        <begin position="1"/>
        <end position="218"/>
    </location>
</feature>
<feature type="region of interest" description="Disordered" evidence="2">
    <location>
        <begin position="1"/>
        <end position="20"/>
    </location>
</feature>
<feature type="compositionally biased region" description="Polar residues" evidence="2">
    <location>
        <begin position="1"/>
        <end position="10"/>
    </location>
</feature>
<feature type="active site" description="Proton acceptor" evidence="1">
    <location>
        <position position="87"/>
    </location>
</feature>
<feature type="site" description="Important for substrate specificity" evidence="1">
    <location>
        <position position="28"/>
    </location>
</feature>
<feature type="site" description="Important for substrate specificity" evidence="1">
    <location>
        <position position="88"/>
    </location>
</feature>
<feature type="site" description="Important for substrate specificity" evidence="1">
    <location>
        <position position="175"/>
    </location>
</feature>
<evidence type="ECO:0000255" key="1">
    <source>
        <dbReference type="HAMAP-Rule" id="MF_00528"/>
    </source>
</evidence>
<evidence type="ECO:0000256" key="2">
    <source>
        <dbReference type="SAM" id="MobiDB-lite"/>
    </source>
</evidence>